<gene>
    <name evidence="1" type="primary">glmM</name>
    <name type="ordered locus">THA_1736</name>
</gene>
<organism>
    <name type="scientific">Thermosipho africanus (strain TCF52B)</name>
    <dbReference type="NCBI Taxonomy" id="484019"/>
    <lineage>
        <taxon>Bacteria</taxon>
        <taxon>Thermotogati</taxon>
        <taxon>Thermotogota</taxon>
        <taxon>Thermotogae</taxon>
        <taxon>Thermotogales</taxon>
        <taxon>Fervidobacteriaceae</taxon>
        <taxon>Thermosipho</taxon>
    </lineage>
</organism>
<keyword id="KW-0413">Isomerase</keyword>
<keyword id="KW-0460">Magnesium</keyword>
<keyword id="KW-0479">Metal-binding</keyword>
<keyword id="KW-0597">Phosphoprotein</keyword>
<keyword id="KW-1185">Reference proteome</keyword>
<sequence length="430" mass="47844">MRYFGTDGIRGVVNEFLTPELAFRLGNAVGNMVNGKVFIAKDTRNSGDMLEAALIAGITSAGADVYRCGIMPTPALALITKLEDAAGIMISASHNPPEYNGLKVIMKGYKLPDSLEERIENEMQNVKYNSFEKVGRVIDYRLAEEEYFNYIKELYKNLDLSGIKIVMDVANGATFNLNPKILEYFGAKIEVVNNEPDGFNINKDCGSTHPENIKNYIVNGKIGILHDGDGDRCIFLDENGQEFHGDKIIGLTALQLKKEGRLKNDKVVVTILSNMGLERFLNENSIDVVRTKVGDRYVLEEMLKENITLGGERSGHIIYLDRSTTGDGLITALETLSAMVNSGKRLADLSNLIPDYPQVMLNVKVSDKEVYKSKEVFEKLKSIKDYRVIVRPSGTEPVVRVLVEGPDMDESTIIANDIADLIKKFDNKKE</sequence>
<accession>B7IDU4</accession>
<name>GLMM_THEAB</name>
<proteinExistence type="inferred from homology"/>
<dbReference type="EC" id="5.4.2.10" evidence="1"/>
<dbReference type="EMBL" id="CP001185">
    <property type="protein sequence ID" value="ACJ76171.1"/>
    <property type="molecule type" value="Genomic_DNA"/>
</dbReference>
<dbReference type="RefSeq" id="WP_012580379.1">
    <property type="nucleotide sequence ID" value="NC_011653.1"/>
</dbReference>
<dbReference type="SMR" id="B7IDU4"/>
<dbReference type="STRING" id="484019.THA_1736"/>
<dbReference type="KEGG" id="taf:THA_1736"/>
<dbReference type="eggNOG" id="COG1109">
    <property type="taxonomic scope" value="Bacteria"/>
</dbReference>
<dbReference type="HOGENOM" id="CLU_016950_7_0_0"/>
<dbReference type="OrthoDB" id="9806956at2"/>
<dbReference type="Proteomes" id="UP000002453">
    <property type="component" value="Chromosome"/>
</dbReference>
<dbReference type="GO" id="GO:0005829">
    <property type="term" value="C:cytosol"/>
    <property type="evidence" value="ECO:0007669"/>
    <property type="project" value="TreeGrafter"/>
</dbReference>
<dbReference type="GO" id="GO:0000287">
    <property type="term" value="F:magnesium ion binding"/>
    <property type="evidence" value="ECO:0007669"/>
    <property type="project" value="UniProtKB-UniRule"/>
</dbReference>
<dbReference type="GO" id="GO:0008966">
    <property type="term" value="F:phosphoglucosamine mutase activity"/>
    <property type="evidence" value="ECO:0007669"/>
    <property type="project" value="UniProtKB-UniRule"/>
</dbReference>
<dbReference type="GO" id="GO:0004615">
    <property type="term" value="F:phosphomannomutase activity"/>
    <property type="evidence" value="ECO:0007669"/>
    <property type="project" value="TreeGrafter"/>
</dbReference>
<dbReference type="GO" id="GO:0005975">
    <property type="term" value="P:carbohydrate metabolic process"/>
    <property type="evidence" value="ECO:0007669"/>
    <property type="project" value="InterPro"/>
</dbReference>
<dbReference type="GO" id="GO:0009252">
    <property type="term" value="P:peptidoglycan biosynthetic process"/>
    <property type="evidence" value="ECO:0007669"/>
    <property type="project" value="TreeGrafter"/>
</dbReference>
<dbReference type="GO" id="GO:0006048">
    <property type="term" value="P:UDP-N-acetylglucosamine biosynthetic process"/>
    <property type="evidence" value="ECO:0007669"/>
    <property type="project" value="TreeGrafter"/>
</dbReference>
<dbReference type="CDD" id="cd05802">
    <property type="entry name" value="GlmM"/>
    <property type="match status" value="1"/>
</dbReference>
<dbReference type="FunFam" id="3.40.120.10:FF:000001">
    <property type="entry name" value="Phosphoglucosamine mutase"/>
    <property type="match status" value="1"/>
</dbReference>
<dbReference type="FunFam" id="3.40.120.10:FF:000002">
    <property type="entry name" value="Phosphoglucosamine mutase"/>
    <property type="match status" value="1"/>
</dbReference>
<dbReference type="Gene3D" id="3.40.120.10">
    <property type="entry name" value="Alpha-D-Glucose-1,6-Bisphosphate, subunit A, domain 3"/>
    <property type="match status" value="3"/>
</dbReference>
<dbReference type="Gene3D" id="3.30.310.50">
    <property type="entry name" value="Alpha-D-phosphohexomutase, C-terminal domain"/>
    <property type="match status" value="1"/>
</dbReference>
<dbReference type="HAMAP" id="MF_01554_B">
    <property type="entry name" value="GlmM_B"/>
    <property type="match status" value="1"/>
</dbReference>
<dbReference type="InterPro" id="IPR005844">
    <property type="entry name" value="A-D-PHexomutase_a/b/a-I"/>
</dbReference>
<dbReference type="InterPro" id="IPR016055">
    <property type="entry name" value="A-D-PHexomutase_a/b/a-I/II/III"/>
</dbReference>
<dbReference type="InterPro" id="IPR005845">
    <property type="entry name" value="A-D-PHexomutase_a/b/a-II"/>
</dbReference>
<dbReference type="InterPro" id="IPR005846">
    <property type="entry name" value="A-D-PHexomutase_a/b/a-III"/>
</dbReference>
<dbReference type="InterPro" id="IPR005843">
    <property type="entry name" value="A-D-PHexomutase_C"/>
</dbReference>
<dbReference type="InterPro" id="IPR036900">
    <property type="entry name" value="A-D-PHexomutase_C_sf"/>
</dbReference>
<dbReference type="InterPro" id="IPR016066">
    <property type="entry name" value="A-D-PHexomutase_CS"/>
</dbReference>
<dbReference type="InterPro" id="IPR005841">
    <property type="entry name" value="Alpha-D-phosphohexomutase_SF"/>
</dbReference>
<dbReference type="InterPro" id="IPR006352">
    <property type="entry name" value="GlmM_bact"/>
</dbReference>
<dbReference type="InterPro" id="IPR050060">
    <property type="entry name" value="Phosphoglucosamine_mutase"/>
</dbReference>
<dbReference type="NCBIfam" id="TIGR01455">
    <property type="entry name" value="glmM"/>
    <property type="match status" value="1"/>
</dbReference>
<dbReference type="PANTHER" id="PTHR42946:SF1">
    <property type="entry name" value="PHOSPHOGLUCOMUTASE (ALPHA-D-GLUCOSE-1,6-BISPHOSPHATE-DEPENDENT)"/>
    <property type="match status" value="1"/>
</dbReference>
<dbReference type="PANTHER" id="PTHR42946">
    <property type="entry name" value="PHOSPHOHEXOSE MUTASE"/>
    <property type="match status" value="1"/>
</dbReference>
<dbReference type="Pfam" id="PF02878">
    <property type="entry name" value="PGM_PMM_I"/>
    <property type="match status" value="1"/>
</dbReference>
<dbReference type="Pfam" id="PF02879">
    <property type="entry name" value="PGM_PMM_II"/>
    <property type="match status" value="1"/>
</dbReference>
<dbReference type="Pfam" id="PF02880">
    <property type="entry name" value="PGM_PMM_III"/>
    <property type="match status" value="1"/>
</dbReference>
<dbReference type="Pfam" id="PF00408">
    <property type="entry name" value="PGM_PMM_IV"/>
    <property type="match status" value="1"/>
</dbReference>
<dbReference type="PRINTS" id="PR00509">
    <property type="entry name" value="PGMPMM"/>
</dbReference>
<dbReference type="SUPFAM" id="SSF55957">
    <property type="entry name" value="Phosphoglucomutase, C-terminal domain"/>
    <property type="match status" value="1"/>
</dbReference>
<dbReference type="SUPFAM" id="SSF53738">
    <property type="entry name" value="Phosphoglucomutase, first 3 domains"/>
    <property type="match status" value="3"/>
</dbReference>
<dbReference type="PROSITE" id="PS00710">
    <property type="entry name" value="PGM_PMM"/>
    <property type="match status" value="1"/>
</dbReference>
<comment type="function">
    <text evidence="1">Catalyzes the conversion of glucosamine-6-phosphate to glucosamine-1-phosphate.</text>
</comment>
<comment type="catalytic activity">
    <reaction evidence="1">
        <text>alpha-D-glucosamine 1-phosphate = D-glucosamine 6-phosphate</text>
        <dbReference type="Rhea" id="RHEA:23424"/>
        <dbReference type="ChEBI" id="CHEBI:58516"/>
        <dbReference type="ChEBI" id="CHEBI:58725"/>
        <dbReference type="EC" id="5.4.2.10"/>
    </reaction>
</comment>
<comment type="cofactor">
    <cofactor evidence="1">
        <name>Mg(2+)</name>
        <dbReference type="ChEBI" id="CHEBI:18420"/>
    </cofactor>
    <text evidence="1">Binds 1 Mg(2+) ion per subunit.</text>
</comment>
<comment type="PTM">
    <text evidence="1">Activated by phosphorylation.</text>
</comment>
<comment type="similarity">
    <text evidence="1">Belongs to the phosphohexose mutase family.</text>
</comment>
<protein>
    <recommendedName>
        <fullName evidence="1">Phosphoglucosamine mutase</fullName>
        <ecNumber evidence="1">5.4.2.10</ecNumber>
    </recommendedName>
</protein>
<reference key="1">
    <citation type="journal article" date="2009" name="J. Bacteriol.">
        <title>The genome of Thermosipho africanus TCF52B: lateral genetic connections to the Firmicutes and Archaea.</title>
        <authorList>
            <person name="Nesboe C.L."/>
            <person name="Bapteste E."/>
            <person name="Curtis B."/>
            <person name="Dahle H."/>
            <person name="Lopez P."/>
            <person name="Macleod D."/>
            <person name="Dlutek M."/>
            <person name="Bowman S."/>
            <person name="Zhaxybayeva O."/>
            <person name="Birkeland N.-K."/>
            <person name="Doolittle W.F."/>
        </authorList>
    </citation>
    <scope>NUCLEOTIDE SEQUENCE [LARGE SCALE GENOMIC DNA]</scope>
    <source>
        <strain>TCF52B</strain>
    </source>
</reference>
<feature type="chain" id="PRO_1000201152" description="Phosphoglucosamine mutase">
    <location>
        <begin position="1"/>
        <end position="430"/>
    </location>
</feature>
<feature type="active site" description="Phosphoserine intermediate" evidence="1">
    <location>
        <position position="93"/>
    </location>
</feature>
<feature type="binding site" description="via phosphate group" evidence="1">
    <location>
        <position position="93"/>
    </location>
    <ligand>
        <name>Mg(2+)</name>
        <dbReference type="ChEBI" id="CHEBI:18420"/>
    </ligand>
</feature>
<feature type="binding site" evidence="1">
    <location>
        <position position="227"/>
    </location>
    <ligand>
        <name>Mg(2+)</name>
        <dbReference type="ChEBI" id="CHEBI:18420"/>
    </ligand>
</feature>
<feature type="binding site" evidence="1">
    <location>
        <position position="229"/>
    </location>
    <ligand>
        <name>Mg(2+)</name>
        <dbReference type="ChEBI" id="CHEBI:18420"/>
    </ligand>
</feature>
<feature type="binding site" evidence="1">
    <location>
        <position position="231"/>
    </location>
    <ligand>
        <name>Mg(2+)</name>
        <dbReference type="ChEBI" id="CHEBI:18420"/>
    </ligand>
</feature>
<feature type="modified residue" description="Phosphoserine" evidence="1">
    <location>
        <position position="93"/>
    </location>
</feature>
<evidence type="ECO:0000255" key="1">
    <source>
        <dbReference type="HAMAP-Rule" id="MF_01554"/>
    </source>
</evidence>